<dbReference type="EMBL" id="CP000099">
    <property type="protein sequence ID" value="AAZ71613.1"/>
    <property type="molecule type" value="Genomic_DNA"/>
</dbReference>
<dbReference type="SMR" id="Q468S9"/>
<dbReference type="STRING" id="269797.Mbar_A2709"/>
<dbReference type="PaxDb" id="269797-Mbar_A2709"/>
<dbReference type="KEGG" id="mba:Mbar_A2709"/>
<dbReference type="eggNOG" id="arCOG04753">
    <property type="taxonomic scope" value="Archaea"/>
</dbReference>
<dbReference type="HOGENOM" id="CLU_014841_3_2_2"/>
<dbReference type="OrthoDB" id="121419at2157"/>
<dbReference type="GO" id="GO:0005737">
    <property type="term" value="C:cytoplasm"/>
    <property type="evidence" value="ECO:0007669"/>
    <property type="project" value="UniProtKB-SubCell"/>
</dbReference>
<dbReference type="GO" id="GO:0009380">
    <property type="term" value="C:excinuclease repair complex"/>
    <property type="evidence" value="ECO:0007669"/>
    <property type="project" value="InterPro"/>
</dbReference>
<dbReference type="GO" id="GO:0003677">
    <property type="term" value="F:DNA binding"/>
    <property type="evidence" value="ECO:0007669"/>
    <property type="project" value="UniProtKB-UniRule"/>
</dbReference>
<dbReference type="GO" id="GO:0009381">
    <property type="term" value="F:excinuclease ABC activity"/>
    <property type="evidence" value="ECO:0007669"/>
    <property type="project" value="UniProtKB-UniRule"/>
</dbReference>
<dbReference type="GO" id="GO:0006289">
    <property type="term" value="P:nucleotide-excision repair"/>
    <property type="evidence" value="ECO:0007669"/>
    <property type="project" value="UniProtKB-UniRule"/>
</dbReference>
<dbReference type="GO" id="GO:0009432">
    <property type="term" value="P:SOS response"/>
    <property type="evidence" value="ECO:0007669"/>
    <property type="project" value="UniProtKB-UniRule"/>
</dbReference>
<dbReference type="CDD" id="cd10434">
    <property type="entry name" value="GIY-YIG_UvrC_Cho"/>
    <property type="match status" value="1"/>
</dbReference>
<dbReference type="FunFam" id="3.30.420.340:FF:000001">
    <property type="entry name" value="UvrABC system protein C"/>
    <property type="match status" value="1"/>
</dbReference>
<dbReference type="FunFam" id="3.40.1440.10:FF:000001">
    <property type="entry name" value="UvrABC system protein C"/>
    <property type="match status" value="1"/>
</dbReference>
<dbReference type="Gene3D" id="3.40.1440.10">
    <property type="entry name" value="GIY-YIG endonuclease"/>
    <property type="match status" value="1"/>
</dbReference>
<dbReference type="Gene3D" id="4.10.860.10">
    <property type="entry name" value="UVR domain"/>
    <property type="match status" value="1"/>
</dbReference>
<dbReference type="Gene3D" id="3.30.420.340">
    <property type="entry name" value="UvrC, RNAse H endonuclease domain"/>
    <property type="match status" value="1"/>
</dbReference>
<dbReference type="HAMAP" id="MF_00203">
    <property type="entry name" value="UvrC"/>
    <property type="match status" value="1"/>
</dbReference>
<dbReference type="InterPro" id="IPR000305">
    <property type="entry name" value="GIY-YIG_endonuc"/>
</dbReference>
<dbReference type="InterPro" id="IPR035901">
    <property type="entry name" value="GIY-YIG_endonuc_sf"/>
</dbReference>
<dbReference type="InterPro" id="IPR047296">
    <property type="entry name" value="GIY-YIG_UvrC_Cho"/>
</dbReference>
<dbReference type="InterPro" id="IPR001943">
    <property type="entry name" value="UVR_dom"/>
</dbReference>
<dbReference type="InterPro" id="IPR036876">
    <property type="entry name" value="UVR_dom_sf"/>
</dbReference>
<dbReference type="InterPro" id="IPR050066">
    <property type="entry name" value="UvrABC_protein_C"/>
</dbReference>
<dbReference type="InterPro" id="IPR004791">
    <property type="entry name" value="UvrC"/>
</dbReference>
<dbReference type="InterPro" id="IPR001162">
    <property type="entry name" value="UvrC_RNase_H_dom"/>
</dbReference>
<dbReference type="InterPro" id="IPR038476">
    <property type="entry name" value="UvrC_RNase_H_dom_sf"/>
</dbReference>
<dbReference type="NCBIfam" id="TIGR00194">
    <property type="entry name" value="uvrC"/>
    <property type="match status" value="1"/>
</dbReference>
<dbReference type="PANTHER" id="PTHR30562:SF1">
    <property type="entry name" value="UVRABC SYSTEM PROTEIN C"/>
    <property type="match status" value="1"/>
</dbReference>
<dbReference type="PANTHER" id="PTHR30562">
    <property type="entry name" value="UVRC/OXIDOREDUCTASE"/>
    <property type="match status" value="1"/>
</dbReference>
<dbReference type="Pfam" id="PF01541">
    <property type="entry name" value="GIY-YIG"/>
    <property type="match status" value="1"/>
</dbReference>
<dbReference type="Pfam" id="PF02151">
    <property type="entry name" value="UVR"/>
    <property type="match status" value="1"/>
</dbReference>
<dbReference type="Pfam" id="PF22920">
    <property type="entry name" value="UvrC_RNaseH"/>
    <property type="match status" value="1"/>
</dbReference>
<dbReference type="Pfam" id="PF08459">
    <property type="entry name" value="UvrC_RNaseH_dom"/>
    <property type="match status" value="1"/>
</dbReference>
<dbReference type="SMART" id="SM00465">
    <property type="entry name" value="GIYc"/>
    <property type="match status" value="1"/>
</dbReference>
<dbReference type="SUPFAM" id="SSF46600">
    <property type="entry name" value="C-terminal UvrC-binding domain of UvrB"/>
    <property type="match status" value="1"/>
</dbReference>
<dbReference type="SUPFAM" id="SSF82771">
    <property type="entry name" value="GIY-YIG endonuclease"/>
    <property type="match status" value="1"/>
</dbReference>
<dbReference type="PROSITE" id="PS50164">
    <property type="entry name" value="GIY_YIG"/>
    <property type="match status" value="1"/>
</dbReference>
<dbReference type="PROSITE" id="PS50151">
    <property type="entry name" value="UVR"/>
    <property type="match status" value="1"/>
</dbReference>
<dbReference type="PROSITE" id="PS50165">
    <property type="entry name" value="UVRC"/>
    <property type="match status" value="1"/>
</dbReference>
<keyword id="KW-0963">Cytoplasm</keyword>
<keyword id="KW-0227">DNA damage</keyword>
<keyword id="KW-0228">DNA excision</keyword>
<keyword id="KW-0234">DNA repair</keyword>
<keyword id="KW-0267">Excision nuclease</keyword>
<keyword id="KW-0742">SOS response</keyword>
<comment type="function">
    <text evidence="1">The UvrABC repair system catalyzes the recognition and processing of DNA lesions. UvrC both incises the 5' and 3' sides of the lesion. The N-terminal half is responsible for the 3' incision and the C-terminal half is responsible for the 5' incision.</text>
</comment>
<comment type="subunit">
    <text evidence="1">Interacts with UvrB in an incision complex.</text>
</comment>
<comment type="subcellular location">
    <subcellularLocation>
        <location evidence="1">Cytoplasm</location>
    </subcellularLocation>
</comment>
<comment type="similarity">
    <text evidence="1">Belongs to the UvrC family.</text>
</comment>
<reference key="1">
    <citation type="journal article" date="2006" name="J. Bacteriol.">
        <title>The Methanosarcina barkeri genome: comparative analysis with Methanosarcina acetivorans and Methanosarcina mazei reveals extensive rearrangement within methanosarcinal genomes.</title>
        <authorList>
            <person name="Maeder D.L."/>
            <person name="Anderson I."/>
            <person name="Brettin T.S."/>
            <person name="Bruce D.C."/>
            <person name="Gilna P."/>
            <person name="Han C.S."/>
            <person name="Lapidus A."/>
            <person name="Metcalf W.W."/>
            <person name="Saunders E."/>
            <person name="Tapia R."/>
            <person name="Sowers K.R."/>
        </authorList>
    </citation>
    <scope>NUCLEOTIDE SEQUENCE [LARGE SCALE GENOMIC DNA]</scope>
    <source>
        <strain>Fusaro / DSM 804</strain>
    </source>
</reference>
<organism>
    <name type="scientific">Methanosarcina barkeri (strain Fusaro / DSM 804)</name>
    <dbReference type="NCBI Taxonomy" id="269797"/>
    <lineage>
        <taxon>Archaea</taxon>
        <taxon>Methanobacteriati</taxon>
        <taxon>Methanobacteriota</taxon>
        <taxon>Stenosarchaea group</taxon>
        <taxon>Methanomicrobia</taxon>
        <taxon>Methanosarcinales</taxon>
        <taxon>Methanosarcinaceae</taxon>
        <taxon>Methanosarcina</taxon>
    </lineage>
</organism>
<name>UVRC_METBF</name>
<proteinExistence type="inferred from homology"/>
<sequence length="519" mass="60100">MIDLEALPHLPGCYLFKNEEGTVIYVGKAKDLKKRVSSYFQKREHDPKTASLIEAVRGFDFIVTNTEVEAFLLENTLIKKHWPRYNILLKDSKRYACIHLTEEKFPRIRLSRKKADNGSFFGPFVSAKERDYIFEVVRKTFQLRTCKKMPKRACLRYHIAACSGPCIGAISAEDYAEKVKKAASVLKGNIRELIESMEKDMRELASRQQFEQAMALRDEIAALEYLQEKQNMERQKKHNEDILNYIVRDDTVYLMLFKVYKGTLEDKQDYVFAFGENFLEEFLVQYYSENEPPEELILPEPLEESLVDFLSHVKGTKVKVTVPKQGEKKELLDLALKNVEIGFFGDRKKLEALQSKLSLPKLPNVIECFDISHLSGTSTVGSMVQFRGGRPDKHNYRRFKIESVEGIDDFASIAEVVRRRYSRLLEDKHDLPDLIIIDGGKGQLSSAFQELRKLKVRVPLISIAKREEEIYVPGIKSPLPIKKEEKASLFVQEIRDEAHRFAITYNRLLRQKSMIPKND</sequence>
<protein>
    <recommendedName>
        <fullName evidence="1">UvrABC system protein C</fullName>
        <shortName evidence="1">Protein UvrC</shortName>
    </recommendedName>
    <alternativeName>
        <fullName evidence="1">Excinuclease ABC subunit C</fullName>
    </alternativeName>
</protein>
<feature type="chain" id="PRO_0000264985" description="UvrABC system protein C">
    <location>
        <begin position="1"/>
        <end position="519"/>
    </location>
</feature>
<feature type="domain" description="GIY-YIG" evidence="1">
    <location>
        <begin position="9"/>
        <end position="87"/>
    </location>
</feature>
<feature type="domain" description="UVR" evidence="1">
    <location>
        <begin position="191"/>
        <end position="226"/>
    </location>
</feature>
<evidence type="ECO:0000255" key="1">
    <source>
        <dbReference type="HAMAP-Rule" id="MF_00203"/>
    </source>
</evidence>
<gene>
    <name evidence="1" type="primary">uvrC</name>
    <name type="ordered locus">Mbar_A2709</name>
</gene>
<accession>Q468S9</accession>